<sequence>MTNPVLNPALPAMAAAPVAATPSAVGSAGIVAPVFLRFDEPLPLASGQTLNGYELAIETYGTLNAQRTNAVLVCHALNASHHVAGVSADNPKDVGWWDNMVGPGKPVDTNRYFVIGVNNLGSCFGSTGPASINPATGRPWGAAFPVLTVEDWVRAQARVADHFGIERFAAVMGGSLGGMQALSWAITCPQRVANCVVVASTPRLSAQNIGFNEVARRAIITDPDFHGGDYYAHGTVPGRGLSVARMIGHITYLSDDDMAEKFGRTRREPAADGAYRYGYDVEFEVESYLRYQGEKFSRYFDANTYLLITRALDYFDPARATGGDLARALAPATADFLLVSFSTDWRFPPERSREMVRALLKNGSPVTYAEIDAPHGHDAFLLDDARYHAVVRGYYERIARELGLNGAVAPEGNSA</sequence>
<organism>
    <name type="scientific">Bordetella pertussis (strain Tohama I / ATCC BAA-589 / NCTC 13251)</name>
    <dbReference type="NCBI Taxonomy" id="257313"/>
    <lineage>
        <taxon>Bacteria</taxon>
        <taxon>Pseudomonadati</taxon>
        <taxon>Pseudomonadota</taxon>
        <taxon>Betaproteobacteria</taxon>
        <taxon>Burkholderiales</taxon>
        <taxon>Alcaligenaceae</taxon>
        <taxon>Bordetella</taxon>
    </lineage>
</organism>
<accession>Q7W0P6</accession>
<evidence type="ECO:0000255" key="1">
    <source>
        <dbReference type="HAMAP-Rule" id="MF_00296"/>
    </source>
</evidence>
<gene>
    <name evidence="1" type="primary">metXS</name>
    <name type="ordered locus">BP0047</name>
</gene>
<reference key="1">
    <citation type="journal article" date="2003" name="Nat. Genet.">
        <title>Comparative analysis of the genome sequences of Bordetella pertussis, Bordetella parapertussis and Bordetella bronchiseptica.</title>
        <authorList>
            <person name="Parkhill J."/>
            <person name="Sebaihia M."/>
            <person name="Preston A."/>
            <person name="Murphy L.D."/>
            <person name="Thomson N.R."/>
            <person name="Harris D.E."/>
            <person name="Holden M.T.G."/>
            <person name="Churcher C.M."/>
            <person name="Bentley S.D."/>
            <person name="Mungall K.L."/>
            <person name="Cerdeno-Tarraga A.-M."/>
            <person name="Temple L."/>
            <person name="James K.D."/>
            <person name="Harris B."/>
            <person name="Quail M.A."/>
            <person name="Achtman M."/>
            <person name="Atkin R."/>
            <person name="Baker S."/>
            <person name="Basham D."/>
            <person name="Bason N."/>
            <person name="Cherevach I."/>
            <person name="Chillingworth T."/>
            <person name="Collins M."/>
            <person name="Cronin A."/>
            <person name="Davis P."/>
            <person name="Doggett J."/>
            <person name="Feltwell T."/>
            <person name="Goble A."/>
            <person name="Hamlin N."/>
            <person name="Hauser H."/>
            <person name="Holroyd S."/>
            <person name="Jagels K."/>
            <person name="Leather S."/>
            <person name="Moule S."/>
            <person name="Norberczak H."/>
            <person name="O'Neil S."/>
            <person name="Ormond D."/>
            <person name="Price C."/>
            <person name="Rabbinowitsch E."/>
            <person name="Rutter S."/>
            <person name="Sanders M."/>
            <person name="Saunders D."/>
            <person name="Seeger K."/>
            <person name="Sharp S."/>
            <person name="Simmonds M."/>
            <person name="Skelton J."/>
            <person name="Squares R."/>
            <person name="Squares S."/>
            <person name="Stevens K."/>
            <person name="Unwin L."/>
            <person name="Whitehead S."/>
            <person name="Barrell B.G."/>
            <person name="Maskell D.J."/>
        </authorList>
    </citation>
    <scope>NUCLEOTIDE SEQUENCE [LARGE SCALE GENOMIC DNA]</scope>
    <source>
        <strain>Tohama I / ATCC BAA-589 / NCTC 13251</strain>
    </source>
</reference>
<proteinExistence type="inferred from homology"/>
<dbReference type="EC" id="2.3.1.46" evidence="1"/>
<dbReference type="EMBL" id="BX640411">
    <property type="protein sequence ID" value="CAE40426.1"/>
    <property type="molecule type" value="Genomic_DNA"/>
</dbReference>
<dbReference type="RefSeq" id="NP_878958.1">
    <property type="nucleotide sequence ID" value="NC_002929.2"/>
</dbReference>
<dbReference type="SMR" id="Q7W0P6"/>
<dbReference type="STRING" id="257313.BP0047"/>
<dbReference type="ESTHER" id="borpe-METX">
    <property type="family name" value="Homoserine_transacetylase"/>
</dbReference>
<dbReference type="PaxDb" id="257313-BP0047"/>
<dbReference type="KEGG" id="bpe:BP0047"/>
<dbReference type="PATRIC" id="fig|257313.5.peg.50"/>
<dbReference type="eggNOG" id="COG2021">
    <property type="taxonomic scope" value="Bacteria"/>
</dbReference>
<dbReference type="HOGENOM" id="CLU_028760_1_2_4"/>
<dbReference type="UniPathway" id="UPA00051">
    <property type="reaction ID" value="UER00075"/>
</dbReference>
<dbReference type="Proteomes" id="UP000002676">
    <property type="component" value="Chromosome"/>
</dbReference>
<dbReference type="GO" id="GO:0005737">
    <property type="term" value="C:cytoplasm"/>
    <property type="evidence" value="ECO:0007669"/>
    <property type="project" value="UniProtKB-SubCell"/>
</dbReference>
<dbReference type="GO" id="GO:0004414">
    <property type="term" value="F:homoserine O-acetyltransferase activity"/>
    <property type="evidence" value="ECO:0007669"/>
    <property type="project" value="TreeGrafter"/>
</dbReference>
<dbReference type="GO" id="GO:0008899">
    <property type="term" value="F:homoserine O-succinyltransferase activity"/>
    <property type="evidence" value="ECO:0007669"/>
    <property type="project" value="UniProtKB-UniRule"/>
</dbReference>
<dbReference type="GO" id="GO:0009092">
    <property type="term" value="P:homoserine metabolic process"/>
    <property type="evidence" value="ECO:0007669"/>
    <property type="project" value="TreeGrafter"/>
</dbReference>
<dbReference type="GO" id="GO:0009086">
    <property type="term" value="P:methionine biosynthetic process"/>
    <property type="evidence" value="ECO:0007669"/>
    <property type="project" value="UniProtKB-UniRule"/>
</dbReference>
<dbReference type="FunFam" id="1.10.1740.110:FF:000001">
    <property type="entry name" value="Homoserine O-acetyltransferase"/>
    <property type="match status" value="1"/>
</dbReference>
<dbReference type="Gene3D" id="1.10.1740.110">
    <property type="match status" value="1"/>
</dbReference>
<dbReference type="Gene3D" id="3.40.50.1820">
    <property type="entry name" value="alpha/beta hydrolase"/>
    <property type="match status" value="1"/>
</dbReference>
<dbReference type="HAMAP" id="MF_00296">
    <property type="entry name" value="MetX_acyltransf"/>
    <property type="match status" value="1"/>
</dbReference>
<dbReference type="InterPro" id="IPR000073">
    <property type="entry name" value="AB_hydrolase_1"/>
</dbReference>
<dbReference type="InterPro" id="IPR029058">
    <property type="entry name" value="AB_hydrolase_fold"/>
</dbReference>
<dbReference type="InterPro" id="IPR008220">
    <property type="entry name" value="HAT_MetX-like"/>
</dbReference>
<dbReference type="NCBIfam" id="TIGR01392">
    <property type="entry name" value="homoserO_Ac_trn"/>
    <property type="match status" value="1"/>
</dbReference>
<dbReference type="NCBIfam" id="NF001209">
    <property type="entry name" value="PRK00175.1"/>
    <property type="match status" value="1"/>
</dbReference>
<dbReference type="PANTHER" id="PTHR32268">
    <property type="entry name" value="HOMOSERINE O-ACETYLTRANSFERASE"/>
    <property type="match status" value="1"/>
</dbReference>
<dbReference type="PANTHER" id="PTHR32268:SF11">
    <property type="entry name" value="HOMOSERINE O-ACETYLTRANSFERASE"/>
    <property type="match status" value="1"/>
</dbReference>
<dbReference type="Pfam" id="PF00561">
    <property type="entry name" value="Abhydrolase_1"/>
    <property type="match status" value="1"/>
</dbReference>
<dbReference type="PIRSF" id="PIRSF000443">
    <property type="entry name" value="Homoser_Ac_trans"/>
    <property type="match status" value="1"/>
</dbReference>
<dbReference type="SUPFAM" id="SSF53474">
    <property type="entry name" value="alpha/beta-Hydrolases"/>
    <property type="match status" value="1"/>
</dbReference>
<comment type="function">
    <text evidence="1">Transfers a succinyl group from succinyl-CoA to L-homoserine, forming succinyl-L-homoserine.</text>
</comment>
<comment type="catalytic activity">
    <reaction evidence="1">
        <text>L-homoserine + succinyl-CoA = O-succinyl-L-homoserine + CoA</text>
        <dbReference type="Rhea" id="RHEA:22008"/>
        <dbReference type="ChEBI" id="CHEBI:57287"/>
        <dbReference type="ChEBI" id="CHEBI:57292"/>
        <dbReference type="ChEBI" id="CHEBI:57476"/>
        <dbReference type="ChEBI" id="CHEBI:57661"/>
        <dbReference type="EC" id="2.3.1.46"/>
    </reaction>
</comment>
<comment type="pathway">
    <text evidence="1">Amino-acid biosynthesis; L-methionine biosynthesis via de novo pathway; O-succinyl-L-homoserine from L-homoserine: step 1/1.</text>
</comment>
<comment type="subunit">
    <text evidence="1">Homodimer.</text>
</comment>
<comment type="subcellular location">
    <subcellularLocation>
        <location evidence="1">Cytoplasm</location>
    </subcellularLocation>
</comment>
<comment type="similarity">
    <text evidence="1">Belongs to the AB hydrolase superfamily. MetX family.</text>
</comment>
<protein>
    <recommendedName>
        <fullName evidence="1">Homoserine O-succinyltransferase</fullName>
        <shortName evidence="1">HST</shortName>
        <ecNumber evidence="1">2.3.1.46</ecNumber>
    </recommendedName>
    <alternativeName>
        <fullName evidence="1">Homoserine transsuccinylase</fullName>
        <shortName evidence="1">HTS</shortName>
    </alternativeName>
</protein>
<name>METXS_BORPE</name>
<keyword id="KW-0012">Acyltransferase</keyword>
<keyword id="KW-0028">Amino-acid biosynthesis</keyword>
<keyword id="KW-0963">Cytoplasm</keyword>
<keyword id="KW-0486">Methionine biosynthesis</keyword>
<keyword id="KW-1185">Reference proteome</keyword>
<keyword id="KW-0808">Transferase</keyword>
<feature type="chain" id="PRO_0000155706" description="Homoserine O-succinyltransferase">
    <location>
        <begin position="1"/>
        <end position="415"/>
    </location>
</feature>
<feature type="domain" description="AB hydrolase-1" evidence="1">
    <location>
        <begin position="69"/>
        <end position="383"/>
    </location>
</feature>
<feature type="active site" description="Nucleophile" evidence="1">
    <location>
        <position position="175"/>
    </location>
</feature>
<feature type="active site" evidence="1">
    <location>
        <position position="344"/>
    </location>
</feature>
<feature type="active site" evidence="1">
    <location>
        <position position="377"/>
    </location>
</feature>
<feature type="binding site" evidence="1">
    <location>
        <position position="245"/>
    </location>
    <ligand>
        <name>substrate</name>
    </ligand>
</feature>
<feature type="binding site" evidence="1">
    <location>
        <position position="378"/>
    </location>
    <ligand>
        <name>substrate</name>
    </ligand>
</feature>
<feature type="site" description="Important for acyl-CoA specificity" evidence="1">
    <location>
        <position position="346"/>
    </location>
</feature>